<dbReference type="EC" id="2.4.2.10" evidence="1"/>
<dbReference type="EMBL" id="CP000262">
    <property type="protein sequence ID" value="ABF37746.1"/>
    <property type="molecule type" value="Genomic_DNA"/>
</dbReference>
<dbReference type="SMR" id="Q1J728"/>
<dbReference type="KEGG" id="spi:MGAS10750_Spy0796"/>
<dbReference type="HOGENOM" id="CLU_074878_1_1_9"/>
<dbReference type="UniPathway" id="UPA00070">
    <property type="reaction ID" value="UER00119"/>
</dbReference>
<dbReference type="Proteomes" id="UP000002434">
    <property type="component" value="Chromosome"/>
</dbReference>
<dbReference type="GO" id="GO:0000287">
    <property type="term" value="F:magnesium ion binding"/>
    <property type="evidence" value="ECO:0007669"/>
    <property type="project" value="UniProtKB-UniRule"/>
</dbReference>
<dbReference type="GO" id="GO:0004588">
    <property type="term" value="F:orotate phosphoribosyltransferase activity"/>
    <property type="evidence" value="ECO:0007669"/>
    <property type="project" value="UniProtKB-UniRule"/>
</dbReference>
<dbReference type="GO" id="GO:0044205">
    <property type="term" value="P:'de novo' UMP biosynthetic process"/>
    <property type="evidence" value="ECO:0007669"/>
    <property type="project" value="UniProtKB-UniRule"/>
</dbReference>
<dbReference type="GO" id="GO:0019856">
    <property type="term" value="P:pyrimidine nucleobase biosynthetic process"/>
    <property type="evidence" value="ECO:0007669"/>
    <property type="project" value="TreeGrafter"/>
</dbReference>
<dbReference type="CDD" id="cd06223">
    <property type="entry name" value="PRTases_typeI"/>
    <property type="match status" value="1"/>
</dbReference>
<dbReference type="Gene3D" id="3.40.50.2020">
    <property type="match status" value="1"/>
</dbReference>
<dbReference type="HAMAP" id="MF_01208">
    <property type="entry name" value="PyrE"/>
    <property type="match status" value="1"/>
</dbReference>
<dbReference type="InterPro" id="IPR023031">
    <property type="entry name" value="OPRT"/>
</dbReference>
<dbReference type="InterPro" id="IPR004467">
    <property type="entry name" value="Or_phspho_trans_dom"/>
</dbReference>
<dbReference type="InterPro" id="IPR000836">
    <property type="entry name" value="PRibTrfase_dom"/>
</dbReference>
<dbReference type="InterPro" id="IPR029057">
    <property type="entry name" value="PRTase-like"/>
</dbReference>
<dbReference type="NCBIfam" id="TIGR00336">
    <property type="entry name" value="pyrE"/>
    <property type="match status" value="1"/>
</dbReference>
<dbReference type="PANTHER" id="PTHR19278">
    <property type="entry name" value="OROTATE PHOSPHORIBOSYLTRANSFERASE"/>
    <property type="match status" value="1"/>
</dbReference>
<dbReference type="PANTHER" id="PTHR19278:SF9">
    <property type="entry name" value="URIDINE 5'-MONOPHOSPHATE SYNTHASE"/>
    <property type="match status" value="1"/>
</dbReference>
<dbReference type="Pfam" id="PF00156">
    <property type="entry name" value="Pribosyltran"/>
    <property type="match status" value="1"/>
</dbReference>
<dbReference type="SUPFAM" id="SSF53271">
    <property type="entry name" value="PRTase-like"/>
    <property type="match status" value="1"/>
</dbReference>
<dbReference type="PROSITE" id="PS00103">
    <property type="entry name" value="PUR_PYR_PR_TRANSFER"/>
    <property type="match status" value="1"/>
</dbReference>
<name>PYRE_STRPF</name>
<feature type="chain" id="PRO_1000066310" description="Orotate phosphoribosyltransferase">
    <location>
        <begin position="1"/>
        <end position="209"/>
    </location>
</feature>
<feature type="binding site" evidence="1">
    <location>
        <position position="96"/>
    </location>
    <ligand>
        <name>5-phospho-alpha-D-ribose 1-diphosphate</name>
        <dbReference type="ChEBI" id="CHEBI:58017"/>
        <note>ligand shared between dimeric partners</note>
    </ligand>
</feature>
<feature type="binding site" evidence="1">
    <location>
        <position position="100"/>
    </location>
    <ligand>
        <name>5-phospho-alpha-D-ribose 1-diphosphate</name>
        <dbReference type="ChEBI" id="CHEBI:58017"/>
        <note>ligand shared between dimeric partners</note>
    </ligand>
</feature>
<feature type="binding site" evidence="1">
    <location>
        <position position="102"/>
    </location>
    <ligand>
        <name>5-phospho-alpha-D-ribose 1-diphosphate</name>
        <dbReference type="ChEBI" id="CHEBI:58017"/>
        <note>ligand shared between dimeric partners</note>
    </ligand>
</feature>
<feature type="binding site" description="in other chain" evidence="1">
    <location>
        <begin position="122"/>
        <end position="130"/>
    </location>
    <ligand>
        <name>5-phospho-alpha-D-ribose 1-diphosphate</name>
        <dbReference type="ChEBI" id="CHEBI:58017"/>
        <note>ligand shared between dimeric partners</note>
    </ligand>
</feature>
<feature type="binding site" evidence="1">
    <location>
        <position position="126"/>
    </location>
    <ligand>
        <name>orotate</name>
        <dbReference type="ChEBI" id="CHEBI:30839"/>
    </ligand>
</feature>
<keyword id="KW-0328">Glycosyltransferase</keyword>
<keyword id="KW-0460">Magnesium</keyword>
<keyword id="KW-0665">Pyrimidine biosynthesis</keyword>
<keyword id="KW-0808">Transferase</keyword>
<proteinExistence type="inferred from homology"/>
<sequence length="209" mass="22771">MTLASQIATQLLDIKAVYLKPEDPFTWASGIKSPIYTDNRVTLSYPKTRDLIENGFVETIRAHFPEVEVIAGTATAGIPHGAIIADKMTLPFAYIRSKPKDHGAGNQIEGRVLKGQKMVIIEDLISTGGSVLDAAAAASREGADVLGVVAIFTYELPKASQNFKEAGIKLITLSNYTELIAVAKLQGYITNDGLHLLKKFKEDQVNWQQ</sequence>
<evidence type="ECO:0000255" key="1">
    <source>
        <dbReference type="HAMAP-Rule" id="MF_01208"/>
    </source>
</evidence>
<reference key="1">
    <citation type="journal article" date="2006" name="Proc. Natl. Acad. Sci. U.S.A.">
        <title>Molecular genetic anatomy of inter- and intraserotype variation in the human bacterial pathogen group A Streptococcus.</title>
        <authorList>
            <person name="Beres S.B."/>
            <person name="Richter E.W."/>
            <person name="Nagiec M.J."/>
            <person name="Sumby P."/>
            <person name="Porcella S.F."/>
            <person name="DeLeo F.R."/>
            <person name="Musser J.M."/>
        </authorList>
    </citation>
    <scope>NUCLEOTIDE SEQUENCE [LARGE SCALE GENOMIC DNA]</scope>
    <source>
        <strain>MGAS10750</strain>
    </source>
</reference>
<accession>Q1J728</accession>
<protein>
    <recommendedName>
        <fullName evidence="1">Orotate phosphoribosyltransferase</fullName>
        <shortName evidence="1">OPRT</shortName>
        <shortName evidence="1">OPRTase</shortName>
        <ecNumber evidence="1">2.4.2.10</ecNumber>
    </recommendedName>
</protein>
<comment type="function">
    <text evidence="1">Catalyzes the transfer of a ribosyl phosphate group from 5-phosphoribose 1-diphosphate to orotate, leading to the formation of orotidine monophosphate (OMP).</text>
</comment>
<comment type="catalytic activity">
    <reaction evidence="1">
        <text>orotidine 5'-phosphate + diphosphate = orotate + 5-phospho-alpha-D-ribose 1-diphosphate</text>
        <dbReference type="Rhea" id="RHEA:10380"/>
        <dbReference type="ChEBI" id="CHEBI:30839"/>
        <dbReference type="ChEBI" id="CHEBI:33019"/>
        <dbReference type="ChEBI" id="CHEBI:57538"/>
        <dbReference type="ChEBI" id="CHEBI:58017"/>
        <dbReference type="EC" id="2.4.2.10"/>
    </reaction>
</comment>
<comment type="cofactor">
    <cofactor evidence="1">
        <name>Mg(2+)</name>
        <dbReference type="ChEBI" id="CHEBI:18420"/>
    </cofactor>
</comment>
<comment type="pathway">
    <text evidence="1">Pyrimidine metabolism; UMP biosynthesis via de novo pathway; UMP from orotate: step 1/2.</text>
</comment>
<comment type="subunit">
    <text evidence="1">Homodimer.</text>
</comment>
<comment type="similarity">
    <text evidence="1">Belongs to the purine/pyrimidine phosphoribosyltransferase family. PyrE subfamily.</text>
</comment>
<gene>
    <name evidence="1" type="primary">pyrE</name>
    <name type="ordered locus">MGAS10750_Spy0796</name>
</gene>
<organism>
    <name type="scientific">Streptococcus pyogenes serotype M4 (strain MGAS10750)</name>
    <dbReference type="NCBI Taxonomy" id="370554"/>
    <lineage>
        <taxon>Bacteria</taxon>
        <taxon>Bacillati</taxon>
        <taxon>Bacillota</taxon>
        <taxon>Bacilli</taxon>
        <taxon>Lactobacillales</taxon>
        <taxon>Streptococcaceae</taxon>
        <taxon>Streptococcus</taxon>
    </lineage>
</organism>